<accession>Q9ATM0</accession>
<organism>
    <name type="scientific">Zea mays</name>
    <name type="common">Maize</name>
    <dbReference type="NCBI Taxonomy" id="4577"/>
    <lineage>
        <taxon>Eukaryota</taxon>
        <taxon>Viridiplantae</taxon>
        <taxon>Streptophyta</taxon>
        <taxon>Embryophyta</taxon>
        <taxon>Tracheophyta</taxon>
        <taxon>Spermatophyta</taxon>
        <taxon>Magnoliopsida</taxon>
        <taxon>Liliopsida</taxon>
        <taxon>Poales</taxon>
        <taxon>Poaceae</taxon>
        <taxon>PACMAD clade</taxon>
        <taxon>Panicoideae</taxon>
        <taxon>Andropogonodae</taxon>
        <taxon>Andropogoneae</taxon>
        <taxon>Tripsacinae</taxon>
        <taxon>Zea</taxon>
    </lineage>
</organism>
<dbReference type="EMBL" id="AF326500">
    <property type="protein sequence ID" value="AAK26767.1"/>
    <property type="molecule type" value="mRNA"/>
</dbReference>
<dbReference type="RefSeq" id="NP_001105029.1">
    <property type="nucleotide sequence ID" value="NM_001111559.1"/>
</dbReference>
<dbReference type="SMR" id="Q9ATM0"/>
<dbReference type="FunCoup" id="Q9ATM0">
    <property type="interactions" value="503"/>
</dbReference>
<dbReference type="STRING" id="4577.Q9ATM0"/>
<dbReference type="PaxDb" id="4577-GRMZM2G168439_P01"/>
<dbReference type="GeneID" id="541893"/>
<dbReference type="KEGG" id="zma:541893"/>
<dbReference type="eggNOG" id="KOG0223">
    <property type="taxonomic scope" value="Eukaryota"/>
</dbReference>
<dbReference type="InParanoid" id="Q9ATM0"/>
<dbReference type="OrthoDB" id="3222at2759"/>
<dbReference type="Proteomes" id="UP000007305">
    <property type="component" value="Unplaced"/>
</dbReference>
<dbReference type="ExpressionAtlas" id="Q9ATM0">
    <property type="expression patterns" value="baseline and differential"/>
</dbReference>
<dbReference type="GO" id="GO:0016020">
    <property type="term" value="C:membrane"/>
    <property type="evidence" value="ECO:0000318"/>
    <property type="project" value="GO_Central"/>
</dbReference>
<dbReference type="GO" id="GO:0005774">
    <property type="term" value="C:vacuolar membrane"/>
    <property type="evidence" value="ECO:0007669"/>
    <property type="project" value="UniProtKB-SubCell"/>
</dbReference>
<dbReference type="GO" id="GO:0015250">
    <property type="term" value="F:water channel activity"/>
    <property type="evidence" value="ECO:0000318"/>
    <property type="project" value="GO_Central"/>
</dbReference>
<dbReference type="GO" id="GO:0006833">
    <property type="term" value="P:water transport"/>
    <property type="evidence" value="ECO:0000318"/>
    <property type="project" value="GO_Central"/>
</dbReference>
<dbReference type="CDD" id="cd00333">
    <property type="entry name" value="MIP"/>
    <property type="match status" value="1"/>
</dbReference>
<dbReference type="FunFam" id="1.20.1080.10:FF:000002">
    <property type="entry name" value="Probable aquaporin TIP1-1"/>
    <property type="match status" value="1"/>
</dbReference>
<dbReference type="Gene3D" id="1.20.1080.10">
    <property type="entry name" value="Glycerol uptake facilitator protein"/>
    <property type="match status" value="1"/>
</dbReference>
<dbReference type="InterPro" id="IPR023271">
    <property type="entry name" value="Aquaporin-like"/>
</dbReference>
<dbReference type="InterPro" id="IPR034294">
    <property type="entry name" value="Aquaporin_transptr"/>
</dbReference>
<dbReference type="InterPro" id="IPR000425">
    <property type="entry name" value="MIP"/>
</dbReference>
<dbReference type="InterPro" id="IPR022357">
    <property type="entry name" value="MIP_CS"/>
</dbReference>
<dbReference type="NCBIfam" id="TIGR00861">
    <property type="entry name" value="MIP"/>
    <property type="match status" value="1"/>
</dbReference>
<dbReference type="PANTHER" id="PTHR45665:SF21">
    <property type="entry name" value="AQUAPORIN TIP1-3"/>
    <property type="match status" value="1"/>
</dbReference>
<dbReference type="PANTHER" id="PTHR45665">
    <property type="entry name" value="AQUAPORIN-8"/>
    <property type="match status" value="1"/>
</dbReference>
<dbReference type="Pfam" id="PF00230">
    <property type="entry name" value="MIP"/>
    <property type="match status" value="1"/>
</dbReference>
<dbReference type="PRINTS" id="PR00783">
    <property type="entry name" value="MINTRINSICP"/>
</dbReference>
<dbReference type="SUPFAM" id="SSF81338">
    <property type="entry name" value="Aquaporin-like"/>
    <property type="match status" value="1"/>
</dbReference>
<dbReference type="PROSITE" id="PS00221">
    <property type="entry name" value="MIP"/>
    <property type="match status" value="1"/>
</dbReference>
<gene>
    <name type="primary">TIP1-2</name>
</gene>
<keyword id="KW-0472">Membrane</keyword>
<keyword id="KW-1185">Reference proteome</keyword>
<keyword id="KW-0677">Repeat</keyword>
<keyword id="KW-0812">Transmembrane</keyword>
<keyword id="KW-1133">Transmembrane helix</keyword>
<keyword id="KW-0813">Transport</keyword>
<keyword id="KW-0926">Vacuole</keyword>
<name>TIP12_MAIZE</name>
<reference key="1">
    <citation type="journal article" date="2001" name="Plant Physiol.">
        <title>Aquaporins constitute a large and highly divergent protein family in maize.</title>
        <authorList>
            <person name="Chaumont F."/>
            <person name="Barrieu F."/>
            <person name="Wojcik E."/>
            <person name="Chrispeels M.J."/>
            <person name="Jung R."/>
        </authorList>
    </citation>
    <scope>NUCLEOTIDE SEQUENCE [MRNA]</scope>
    <scope>GENE FAMILY</scope>
    <scope>NOMENCLATURE</scope>
    <source>
        <strain>cv. B73</strain>
    </source>
</reference>
<evidence type="ECO:0000250" key="1"/>
<evidence type="ECO:0000255" key="2"/>
<evidence type="ECO:0000305" key="3"/>
<feature type="chain" id="PRO_0000286002" description="Aquaporin TIP1-2">
    <location>
        <begin position="1"/>
        <end position="254"/>
    </location>
</feature>
<feature type="transmembrane region" description="Helical; Name=1" evidence="2">
    <location>
        <begin position="24"/>
        <end position="44"/>
    </location>
</feature>
<feature type="transmembrane region" description="Helical; Name=2" evidence="2">
    <location>
        <begin position="56"/>
        <end position="76"/>
    </location>
</feature>
<feature type="transmembrane region" description="Helical; Name=3" evidence="2">
    <location>
        <begin position="103"/>
        <end position="123"/>
    </location>
</feature>
<feature type="transmembrane region" description="Helical; Name=4" evidence="2">
    <location>
        <begin position="144"/>
        <end position="164"/>
    </location>
</feature>
<feature type="transmembrane region" description="Helical; Name=5" evidence="2">
    <location>
        <begin position="173"/>
        <end position="193"/>
    </location>
</feature>
<feature type="transmembrane region" description="Helical; Name=6" evidence="2">
    <location>
        <begin position="220"/>
        <end position="240"/>
    </location>
</feature>
<feature type="short sequence motif" description="NPA 1" evidence="1">
    <location>
        <begin position="85"/>
        <end position="87"/>
    </location>
</feature>
<feature type="short sequence motif" description="NPA 2" evidence="1">
    <location>
        <begin position="199"/>
        <end position="201"/>
    </location>
</feature>
<sequence>MPVSRIAVGAPGELSHPDTAKAAVAEFISTLIFVFAGSGSGMAFSKLTDGGAATPAGLIAASLAHALALFVAVSVGANISGGHVNPAVTFGAFVGGNISLLKALVYWVAQLLGSVVACLLLKIATGGAALGAFSLSAGVGAMNAVVLEMVMTFGLVYTVYATAVDPKKGDLGVIAPIAIGFIVGANILAGGAFDGASMNPAVSFGPAVVTGVWENHWVYWVGPLAGAAIAALVYDIIFIGQRPHQQLPTTAADY</sequence>
<comment type="function">
    <text evidence="1">Aquaporins facilitate the transport of water and small neutral solutes across cell membranes.</text>
</comment>
<comment type="subcellular location">
    <subcellularLocation>
        <location evidence="1">Vacuole membrane</location>
        <topology evidence="1">Multi-pass membrane protein</topology>
    </subcellularLocation>
    <text>Tonoplast.</text>
</comment>
<comment type="domain">
    <text>Aquaporins contain two tandem repeats each containing three membrane-spanning domains and a pore-forming loop with the signature motif Asn-Pro-Ala (NPA).</text>
</comment>
<comment type="similarity">
    <text evidence="3">Belongs to the MIP/aquaporin (TC 1.A.8) family. TIP (TC 1.A.8.10) subfamily.</text>
</comment>
<protein>
    <recommendedName>
        <fullName>Aquaporin TIP1-2</fullName>
    </recommendedName>
    <alternativeName>
        <fullName>Tonoplast intrinsic protein 1-2</fullName>
    </alternativeName>
    <alternativeName>
        <fullName>ZmTIP1-2</fullName>
    </alternativeName>
    <alternativeName>
        <fullName>ZmTIP1;2</fullName>
    </alternativeName>
</protein>
<proteinExistence type="evidence at transcript level"/>